<protein>
    <recommendedName>
        <fullName>Protein C42</fullName>
        <shortName>C42</shortName>
    </recommendedName>
    <alternativeName>
        <fullName>P40</fullName>
    </alternativeName>
</protein>
<feature type="chain" id="PRO_0000133034" description="Protein C42">
    <location>
        <begin position="1"/>
        <end position="361"/>
    </location>
</feature>
<feature type="region of interest" description="LXCXE motif">
    <location>
        <begin position="32"/>
        <end position="36"/>
    </location>
</feature>
<feature type="short sequence motif" description="Nuclear localization signal" evidence="3 4">
    <location>
        <begin position="357"/>
        <end position="360"/>
    </location>
</feature>
<feature type="sequence conflict" description="In Ref. 2; AAB08767." evidence="6" ref="2">
    <original>D</original>
    <variation>V</variation>
    <location>
        <position position="35"/>
    </location>
</feature>
<feature type="sequence conflict" description="In Ref. 2; AAB08767." evidence="6" ref="2">
    <original>NYAVSNCKFNIEDYNNIFKV</original>
    <variation>TMPCPIASSTLRITITYLRL</variation>
    <location>
        <begin position="308"/>
        <end position="327"/>
    </location>
</feature>
<reference key="1">
    <citation type="journal article" date="1994" name="Virology">
        <title>The complete DNA sequence of Autographa californica nuclear polyhedrosis virus.</title>
        <authorList>
            <person name="Ayres M.D."/>
            <person name="Howard S.C."/>
            <person name="Kuzio J."/>
            <person name="Lopez-Ferber M."/>
            <person name="Possee R.D."/>
        </authorList>
    </citation>
    <scope>NUCLEOTIDE SEQUENCE [LARGE SCALE GENOMIC DNA]</scope>
    <source>
        <strain>C6</strain>
    </source>
</reference>
<reference key="2">
    <citation type="submission" date="1994-06" db="EMBL/GenBank/DDBJ databases">
        <authorList>
            <person name="Lu A."/>
            <person name="Craig A."/>
            <person name="Carstens E.B."/>
        </authorList>
    </citation>
    <scope>NUCLEOTIDE SEQUENCE [GENOMIC DNA]</scope>
    <source>
        <strain>HR3</strain>
    </source>
</reference>
<reference key="3">
    <citation type="journal article" date="1987" name="J. Virol.">
        <title>Location, transcription, and sequence of a baculovirus gene encoding a small arginine-rich polypeptide.</title>
        <authorList>
            <person name="Wilson M.E."/>
            <person name="Mainprize T.H."/>
            <person name="Friesen P.D."/>
            <person name="Miller L.K."/>
        </authorList>
    </citation>
    <scope>NUCLEOTIDE SEQUENCE [GENOMIC DNA] OF 308-361</scope>
    <source>
        <strain>L1</strain>
    </source>
</reference>
<reference key="4">
    <citation type="journal article" date="2001" name="J. Virol.">
        <title>Identification of BV/ODV-C42, an Autographa californica nucleopolyhedrovirus orf101-encoded structural protein detected in infected-cell complexes with ODV-EC27 and p78/83.</title>
        <authorList>
            <person name="Braunagel S.C."/>
            <person name="Guidry P.A."/>
            <person name="Rosas-Acosta G."/>
            <person name="Engelking L."/>
            <person name="Summers M.D."/>
        </authorList>
    </citation>
    <scope>FUNCTION</scope>
    <scope>INTERACTION WITH E27 AND P78/83</scope>
    <scope>SUBCELLULAR LOCATION</scope>
</reference>
<reference key="5">
    <citation type="journal article" date="2007" name="J. Virol.">
        <title>Autographa californica multiple nucleopolyhedrovirus EXON0 (ORF141) is required for efficient egress of nucleocapsids from the nucleus.</title>
        <authorList>
            <person name="Fang M."/>
            <person name="Dai X."/>
            <person name="Theilmann D.A."/>
        </authorList>
    </citation>
    <scope>INTERACTION WITH IE0</scope>
</reference>
<reference key="6">
    <citation type="journal article" date="2008" name="J. Virol.">
        <title>Autographa californica multiple nucleopolyhedrovirus nucleocapsid protein BV/ODV-C42 mediates the nuclear entry of P78/83.</title>
        <authorList>
            <person name="Wang Y."/>
            <person name="Wang Q."/>
            <person name="Liang C."/>
            <person name="Song J."/>
            <person name="Li N."/>
            <person name="Shi H."/>
            <person name="Chen X."/>
        </authorList>
    </citation>
    <scope>NUCLEAR LOCALIZATION SIGNAL</scope>
</reference>
<reference key="7">
    <citation type="journal article" date="2010" name="J. Virol.">
        <title>The putative pocket protein binding site of Autographa californica nucleopolyhedrovirus BV/ODV-C42 is required for virus-induced nuclear actin polymerization.</title>
        <authorList>
            <person name="Li K."/>
            <person name="Wang Y."/>
            <person name="Bai H."/>
            <person name="Wang Q."/>
            <person name="Song J."/>
            <person name="Zhou Y."/>
            <person name="Wu C."/>
            <person name="Chen X."/>
        </authorList>
    </citation>
    <scope>FUNCTION</scope>
</reference>
<reference key="8">
    <citation type="journal article" date="2018" name="J. Virol.">
        <title>Ac102 Participates in Nuclear Actin Polymerization by Modulating BV/ODV-C42 Ubiquitination during Autographa californica Multiple Nucleopolyhedrovirus Infection.</title>
        <authorList>
            <person name="Zhang Y."/>
            <person name="Hu X."/>
            <person name="Mu J."/>
            <person name="Hu Y."/>
            <person name="Zhou Y."/>
            <person name="Zhao H."/>
            <person name="Wu C."/>
            <person name="Pei R."/>
            <person name="Chen J."/>
            <person name="Chen X."/>
            <person name="Wang Y."/>
        </authorList>
    </citation>
    <scope>INTERACTION WITH PROTEIN AC102</scope>
</reference>
<evidence type="ECO:0000269" key="1">
    <source>
    </source>
</evidence>
<evidence type="ECO:0000269" key="2">
    <source>
    </source>
</evidence>
<evidence type="ECO:0000269" key="3">
    <source>
    </source>
</evidence>
<evidence type="ECO:0000269" key="4">
    <source>
    </source>
</evidence>
<evidence type="ECO:0000269" key="5">
    <source>
    </source>
</evidence>
<evidence type="ECO:0000305" key="6"/>
<sequence>MSAIALYLEINKLRLKIDEPMQLAIWPQLFPLLCDEHQSVQLNTDVLINFMMHVARKSQNTILNNNAAIASQYAAGNADVVAAPASAQPTPRPVINLFARANAAAPAQPSEELINMRRYRNAARKLIHHYSLNSTSSTEYKISDVVMTMIFLLRSEKYHSLFKLLETTFDDYTCRPQMTQVQTDTLLDAVRSLLEMPSTTIDLTTVDIMRSSFARCFNSPIMRYAKIVLLQNVALQRDKRTTLEELLIERGEKIQMLQPQQYINSGTEIPFCDDAEFLNRLLKHIDPYPLSRMYYNAANTMFYTTMENYAVSNCKFNIEDYNNIFKVMENIRKHSNKNSNDQDELNIYLGVQSSNAKRKKY</sequence>
<keyword id="KW-0002">3D-structure</keyword>
<keyword id="KW-1048">Host nucleus</keyword>
<keyword id="KW-0426">Late protein</keyword>
<keyword id="KW-1185">Reference proteome</keyword>
<keyword id="KW-0946">Virion</keyword>
<gene>
    <name type="ORF">ORF101</name>
</gene>
<dbReference type="EMBL" id="L22858">
    <property type="protein sequence ID" value="AAA66731.1"/>
    <property type="molecule type" value="Genomic_DNA"/>
</dbReference>
<dbReference type="EMBL" id="U10885">
    <property type="protein sequence ID" value="AAB08767.1"/>
    <property type="molecule type" value="Genomic_DNA"/>
</dbReference>
<dbReference type="EMBL" id="M15370">
    <property type="status" value="NOT_ANNOTATED_CDS"/>
    <property type="molecule type" value="Genomic_DNA"/>
</dbReference>
<dbReference type="PIR" id="F72862">
    <property type="entry name" value="F72862"/>
</dbReference>
<dbReference type="PDB" id="8I8B">
    <property type="method" value="EM"/>
    <property type="resolution" value="4.31 A"/>
    <property type="chains" value="F/G=1-361"/>
</dbReference>
<dbReference type="PDB" id="8I8C">
    <property type="method" value="EM"/>
    <property type="resolution" value="4.93 A"/>
    <property type="chains" value="K/L=1-361"/>
</dbReference>
<dbReference type="PDB" id="8VWI">
    <property type="method" value="EM"/>
    <property type="resolution" value="4.71 A"/>
    <property type="chains" value="K/L/R/T/f/g=1-361"/>
</dbReference>
<dbReference type="PDB" id="8VWJ">
    <property type="method" value="EM"/>
    <property type="resolution" value="4.78 A"/>
    <property type="chains" value="K/L/R/T/f/g=1-361"/>
</dbReference>
<dbReference type="PDBsum" id="8I8B"/>
<dbReference type="PDBsum" id="8I8C"/>
<dbReference type="PDBsum" id="8VWI"/>
<dbReference type="PDBsum" id="8VWJ"/>
<dbReference type="EMDB" id="EMD-43588"/>
<dbReference type="EMDB" id="EMD-43589"/>
<dbReference type="SMR" id="P25695"/>
<dbReference type="KEGG" id="vg:1403934"/>
<dbReference type="OrthoDB" id="7368at10239"/>
<dbReference type="Proteomes" id="UP000008292">
    <property type="component" value="Segment"/>
</dbReference>
<dbReference type="GO" id="GO:0042025">
    <property type="term" value="C:host cell nucleus"/>
    <property type="evidence" value="ECO:0000314"/>
    <property type="project" value="UniProtKB"/>
</dbReference>
<dbReference type="GO" id="GO:0044423">
    <property type="term" value="C:virion component"/>
    <property type="evidence" value="ECO:0007669"/>
    <property type="project" value="UniProtKB-KW"/>
</dbReference>
<dbReference type="InterPro" id="IPR008562">
    <property type="entry name" value="AcMNPV_C42"/>
</dbReference>
<dbReference type="Pfam" id="PF05815">
    <property type="entry name" value="AcMNPV_Orf101"/>
    <property type="match status" value="1"/>
</dbReference>
<name>C42_NPVAC</name>
<organismHost>
    <name type="scientific">Lepidoptera</name>
    <name type="common">butterflies and moths</name>
    <dbReference type="NCBI Taxonomy" id="7088"/>
</organismHost>
<comment type="function">
    <text evidence="1 4">Plays a role in host nuclear actin polymerization by recruiting p78/73 protein that is capable of activating an actin-related protein 2/3 complex to initiate nuclear actin polymerization.</text>
</comment>
<comment type="subunit">
    <text evidence="1 2 5">Forms a complex with proteins E27 and p78/83. The interaction with p78/83 mediates nuclear translocation of P78/83. Interacts with protein Ac102. Interacts with IE0.</text>
</comment>
<comment type="subcellular location">
    <subcellularLocation>
        <location evidence="1">Host nucleus</location>
    </subcellularLocation>
    <subcellularLocation>
        <location evidence="1">Virion</location>
    </subcellularLocation>
</comment>
<comment type="similarity">
    <text evidence="6">Belongs to the baculoviridae C42 protein family.</text>
</comment>
<proteinExistence type="evidence at protein level"/>
<accession>P25695</accession>
<organism>
    <name type="scientific">Autographa californica nuclear polyhedrosis virus</name>
    <name type="common">AcMNPV</name>
    <dbReference type="NCBI Taxonomy" id="46015"/>
    <lineage>
        <taxon>Viruses</taxon>
        <taxon>Viruses incertae sedis</taxon>
        <taxon>Naldaviricetes</taxon>
        <taxon>Lefavirales</taxon>
        <taxon>Baculoviridae</taxon>
        <taxon>Alphabaculovirus</taxon>
        <taxon>Alphabaculovirus aucalifornicae</taxon>
    </lineage>
</organism>